<dbReference type="EC" id="2.4.2.18" evidence="1"/>
<dbReference type="EMBL" id="LT708304">
    <property type="protein sequence ID" value="SIU00823.1"/>
    <property type="molecule type" value="Genomic_DNA"/>
</dbReference>
<dbReference type="RefSeq" id="NP_855864.1">
    <property type="nucleotide sequence ID" value="NC_002945.3"/>
</dbReference>
<dbReference type="RefSeq" id="WP_003411387.1">
    <property type="nucleotide sequence ID" value="NC_002945.4"/>
</dbReference>
<dbReference type="SMR" id="P66993"/>
<dbReference type="GeneID" id="45427983"/>
<dbReference type="KEGG" id="mbo:BQ2027_MB2215C"/>
<dbReference type="PATRIC" id="fig|233413.5.peg.2431"/>
<dbReference type="UniPathway" id="UPA00035">
    <property type="reaction ID" value="UER00041"/>
</dbReference>
<dbReference type="Proteomes" id="UP000001419">
    <property type="component" value="Chromosome"/>
</dbReference>
<dbReference type="GO" id="GO:0005829">
    <property type="term" value="C:cytosol"/>
    <property type="evidence" value="ECO:0007669"/>
    <property type="project" value="TreeGrafter"/>
</dbReference>
<dbReference type="GO" id="GO:0004048">
    <property type="term" value="F:anthranilate phosphoribosyltransferase activity"/>
    <property type="evidence" value="ECO:0007669"/>
    <property type="project" value="UniProtKB-UniRule"/>
</dbReference>
<dbReference type="GO" id="GO:0000287">
    <property type="term" value="F:magnesium ion binding"/>
    <property type="evidence" value="ECO:0007669"/>
    <property type="project" value="UniProtKB-UniRule"/>
</dbReference>
<dbReference type="GO" id="GO:0000162">
    <property type="term" value="P:L-tryptophan biosynthetic process"/>
    <property type="evidence" value="ECO:0007669"/>
    <property type="project" value="UniProtKB-UniRule"/>
</dbReference>
<dbReference type="FunFam" id="1.20.970.10:FF:000006">
    <property type="entry name" value="Anthranilate phosphoribosyltransferase"/>
    <property type="match status" value="1"/>
</dbReference>
<dbReference type="FunFam" id="3.40.1030.10:FF:000002">
    <property type="entry name" value="Anthranilate phosphoribosyltransferase"/>
    <property type="match status" value="1"/>
</dbReference>
<dbReference type="Gene3D" id="3.40.1030.10">
    <property type="entry name" value="Nucleoside phosphorylase/phosphoribosyltransferase catalytic domain"/>
    <property type="match status" value="1"/>
</dbReference>
<dbReference type="Gene3D" id="1.20.970.10">
    <property type="entry name" value="Transferase, Pyrimidine Nucleoside Phosphorylase, Chain C"/>
    <property type="match status" value="1"/>
</dbReference>
<dbReference type="HAMAP" id="MF_00211">
    <property type="entry name" value="TrpD"/>
    <property type="match status" value="1"/>
</dbReference>
<dbReference type="InterPro" id="IPR005940">
    <property type="entry name" value="Anthranilate_Pribosyl_Tfrase"/>
</dbReference>
<dbReference type="InterPro" id="IPR000312">
    <property type="entry name" value="Glycosyl_Trfase_fam3"/>
</dbReference>
<dbReference type="InterPro" id="IPR017459">
    <property type="entry name" value="Glycosyl_Trfase_fam3_N_dom"/>
</dbReference>
<dbReference type="InterPro" id="IPR036320">
    <property type="entry name" value="Glycosyl_Trfase_fam3_N_dom_sf"/>
</dbReference>
<dbReference type="InterPro" id="IPR035902">
    <property type="entry name" value="Nuc_phospho_transferase"/>
</dbReference>
<dbReference type="NCBIfam" id="TIGR01245">
    <property type="entry name" value="trpD"/>
    <property type="match status" value="1"/>
</dbReference>
<dbReference type="PANTHER" id="PTHR43285">
    <property type="entry name" value="ANTHRANILATE PHOSPHORIBOSYLTRANSFERASE"/>
    <property type="match status" value="1"/>
</dbReference>
<dbReference type="PANTHER" id="PTHR43285:SF2">
    <property type="entry name" value="ANTHRANILATE PHOSPHORIBOSYLTRANSFERASE"/>
    <property type="match status" value="1"/>
</dbReference>
<dbReference type="Pfam" id="PF02885">
    <property type="entry name" value="Glycos_trans_3N"/>
    <property type="match status" value="1"/>
</dbReference>
<dbReference type="Pfam" id="PF00591">
    <property type="entry name" value="Glycos_transf_3"/>
    <property type="match status" value="1"/>
</dbReference>
<dbReference type="SUPFAM" id="SSF52418">
    <property type="entry name" value="Nucleoside phosphorylase/phosphoribosyltransferase catalytic domain"/>
    <property type="match status" value="1"/>
</dbReference>
<dbReference type="SUPFAM" id="SSF47648">
    <property type="entry name" value="Nucleoside phosphorylase/phosphoribosyltransferase N-terminal domain"/>
    <property type="match status" value="1"/>
</dbReference>
<organism>
    <name type="scientific">Mycobacterium bovis (strain ATCC BAA-935 / AF2122/97)</name>
    <dbReference type="NCBI Taxonomy" id="233413"/>
    <lineage>
        <taxon>Bacteria</taxon>
        <taxon>Bacillati</taxon>
        <taxon>Actinomycetota</taxon>
        <taxon>Actinomycetes</taxon>
        <taxon>Mycobacteriales</taxon>
        <taxon>Mycobacteriaceae</taxon>
        <taxon>Mycobacterium</taxon>
        <taxon>Mycobacterium tuberculosis complex</taxon>
    </lineage>
</organism>
<reference key="1">
    <citation type="journal article" date="2003" name="Proc. Natl. Acad. Sci. U.S.A.">
        <title>The complete genome sequence of Mycobacterium bovis.</title>
        <authorList>
            <person name="Garnier T."/>
            <person name="Eiglmeier K."/>
            <person name="Camus J.-C."/>
            <person name="Medina N."/>
            <person name="Mansoor H."/>
            <person name="Pryor M."/>
            <person name="Duthoy S."/>
            <person name="Grondin S."/>
            <person name="Lacroix C."/>
            <person name="Monsempe C."/>
            <person name="Simon S."/>
            <person name="Harris B."/>
            <person name="Atkin R."/>
            <person name="Doggett J."/>
            <person name="Mayes R."/>
            <person name="Keating L."/>
            <person name="Wheeler P.R."/>
            <person name="Parkhill J."/>
            <person name="Barrell B.G."/>
            <person name="Cole S.T."/>
            <person name="Gordon S.V."/>
            <person name="Hewinson R.G."/>
        </authorList>
    </citation>
    <scope>NUCLEOTIDE SEQUENCE [LARGE SCALE GENOMIC DNA]</scope>
    <source>
        <strain>ATCC BAA-935 / AF2122/97</strain>
    </source>
</reference>
<reference key="2">
    <citation type="journal article" date="2017" name="Genome Announc.">
        <title>Updated reference genome sequence and annotation of Mycobacterium bovis AF2122/97.</title>
        <authorList>
            <person name="Malone K.M."/>
            <person name="Farrell D."/>
            <person name="Stuber T.P."/>
            <person name="Schubert O.T."/>
            <person name="Aebersold R."/>
            <person name="Robbe-Austerman S."/>
            <person name="Gordon S.V."/>
        </authorList>
    </citation>
    <scope>NUCLEOTIDE SEQUENCE [LARGE SCALE GENOMIC DNA]</scope>
    <scope>GENOME REANNOTATION</scope>
    <source>
        <strain>ATCC BAA-935 / AF2122/97</strain>
    </source>
</reference>
<accession>P66993</accession>
<accession>A0A1R3Y0G8</accession>
<accession>Q10382</accession>
<accession>X2BK14</accession>
<evidence type="ECO:0000255" key="1">
    <source>
        <dbReference type="HAMAP-Rule" id="MF_00211"/>
    </source>
</evidence>
<evidence type="ECO:0000256" key="2">
    <source>
        <dbReference type="SAM" id="MobiDB-lite"/>
    </source>
</evidence>
<comment type="function">
    <text evidence="1">Catalyzes the transfer of the phosphoribosyl group of 5-phosphorylribose-1-pyrophosphate (PRPP) to anthranilate to yield N-(5'-phosphoribosyl)-anthranilate (PRA).</text>
</comment>
<comment type="catalytic activity">
    <reaction evidence="1">
        <text>N-(5-phospho-beta-D-ribosyl)anthranilate + diphosphate = 5-phospho-alpha-D-ribose 1-diphosphate + anthranilate</text>
        <dbReference type="Rhea" id="RHEA:11768"/>
        <dbReference type="ChEBI" id="CHEBI:16567"/>
        <dbReference type="ChEBI" id="CHEBI:18277"/>
        <dbReference type="ChEBI" id="CHEBI:33019"/>
        <dbReference type="ChEBI" id="CHEBI:58017"/>
        <dbReference type="EC" id="2.4.2.18"/>
    </reaction>
</comment>
<comment type="cofactor">
    <cofactor evidence="1">
        <name>Mg(2+)</name>
        <dbReference type="ChEBI" id="CHEBI:18420"/>
    </cofactor>
    <text evidence="1">Binds 2 magnesium ions per monomer.</text>
</comment>
<comment type="pathway">
    <text evidence="1">Amino-acid biosynthesis; L-tryptophan biosynthesis; L-tryptophan from chorismate: step 2/5.</text>
</comment>
<comment type="subunit">
    <text evidence="1">Homodimer.</text>
</comment>
<comment type="similarity">
    <text evidence="1">Belongs to the anthranilate phosphoribosyltransferase family.</text>
</comment>
<feature type="chain" id="PRO_0000154462" description="Anthranilate phosphoribosyltransferase">
    <location>
        <begin position="1"/>
        <end position="370"/>
    </location>
</feature>
<feature type="region of interest" description="Disordered" evidence="2">
    <location>
        <begin position="1"/>
        <end position="27"/>
    </location>
</feature>
<feature type="binding site" evidence="1">
    <location>
        <position position="107"/>
    </location>
    <ligand>
        <name>5-phospho-alpha-D-ribose 1-diphosphate</name>
        <dbReference type="ChEBI" id="CHEBI:58017"/>
    </ligand>
</feature>
<feature type="binding site" evidence="1">
    <location>
        <position position="107"/>
    </location>
    <ligand>
        <name>anthranilate</name>
        <dbReference type="ChEBI" id="CHEBI:16567"/>
        <label>1</label>
    </ligand>
</feature>
<feature type="binding site" evidence="1">
    <location>
        <begin position="110"/>
        <end position="111"/>
    </location>
    <ligand>
        <name>5-phospho-alpha-D-ribose 1-diphosphate</name>
        <dbReference type="ChEBI" id="CHEBI:58017"/>
    </ligand>
</feature>
<feature type="binding site" evidence="1">
    <location>
        <position position="115"/>
    </location>
    <ligand>
        <name>5-phospho-alpha-D-ribose 1-diphosphate</name>
        <dbReference type="ChEBI" id="CHEBI:58017"/>
    </ligand>
</feature>
<feature type="binding site" evidence="1">
    <location>
        <begin position="117"/>
        <end position="120"/>
    </location>
    <ligand>
        <name>5-phospho-alpha-D-ribose 1-diphosphate</name>
        <dbReference type="ChEBI" id="CHEBI:58017"/>
    </ligand>
</feature>
<feature type="binding site" evidence="1">
    <location>
        <position position="119"/>
    </location>
    <ligand>
        <name>Mg(2+)</name>
        <dbReference type="ChEBI" id="CHEBI:18420"/>
        <label>1</label>
    </ligand>
</feature>
<feature type="binding site" evidence="1">
    <location>
        <begin position="135"/>
        <end position="143"/>
    </location>
    <ligand>
        <name>5-phospho-alpha-D-ribose 1-diphosphate</name>
        <dbReference type="ChEBI" id="CHEBI:58017"/>
    </ligand>
</feature>
<feature type="binding site" evidence="1">
    <location>
        <position position="138"/>
    </location>
    <ligand>
        <name>anthranilate</name>
        <dbReference type="ChEBI" id="CHEBI:16567"/>
        <label>1</label>
    </ligand>
</feature>
<feature type="binding site" evidence="1">
    <location>
        <position position="147"/>
    </location>
    <ligand>
        <name>5-phospho-alpha-D-ribose 1-diphosphate</name>
        <dbReference type="ChEBI" id="CHEBI:58017"/>
    </ligand>
</feature>
<feature type="binding site" evidence="1">
    <location>
        <position position="193"/>
    </location>
    <ligand>
        <name>anthranilate</name>
        <dbReference type="ChEBI" id="CHEBI:16567"/>
        <label>2</label>
    </ligand>
</feature>
<feature type="binding site" evidence="1">
    <location>
        <position position="251"/>
    </location>
    <ligand>
        <name>Mg(2+)</name>
        <dbReference type="ChEBI" id="CHEBI:18420"/>
        <label>2</label>
    </ligand>
</feature>
<feature type="binding site" evidence="1">
    <location>
        <position position="252"/>
    </location>
    <ligand>
        <name>Mg(2+)</name>
        <dbReference type="ChEBI" id="CHEBI:18420"/>
        <label>1</label>
    </ligand>
</feature>
<feature type="binding site" evidence="1">
    <location>
        <position position="252"/>
    </location>
    <ligand>
        <name>Mg(2+)</name>
        <dbReference type="ChEBI" id="CHEBI:18420"/>
        <label>2</label>
    </ligand>
</feature>
<name>TRPD_MYCBO</name>
<gene>
    <name evidence="1" type="primary">trpD</name>
    <name type="ordered locus">BQ2027_MB2215C</name>
</gene>
<protein>
    <recommendedName>
        <fullName evidence="1">Anthranilate phosphoribosyltransferase</fullName>
        <ecNumber evidence="1">2.4.2.18</ecNumber>
    </recommendedName>
</protein>
<keyword id="KW-0028">Amino-acid biosynthesis</keyword>
<keyword id="KW-0057">Aromatic amino acid biosynthesis</keyword>
<keyword id="KW-0328">Glycosyltransferase</keyword>
<keyword id="KW-0460">Magnesium</keyword>
<keyword id="KW-0479">Metal-binding</keyword>
<keyword id="KW-1185">Reference proteome</keyword>
<keyword id="KW-0808">Transferase</keyword>
<keyword id="KW-0822">Tryptophan biosynthesis</keyword>
<sequence length="370" mass="37740">MALSAEGSSGGSRGGSPKAEAASVPSWPQILGRLTDNRDLARGQAAWAMDQIMTGNARPAQIAAFAVAMTMKAPTADEVGELAGVMLSHAHPLPADTVPDDAVDVVGTGGDGVNTVNLSTMAAIVVAAAGVPVVKHGNRAASSLSGGADTLEALGVRIDLGPDLVARSLAEVGIGFCFAPRFHPSYRHAAAVRREIGVPTVFNLLGPLTNPARPRAGLIGCAFADLAEVMAGVFAARRSSVLVVHGDDGLDELTTTTTSTIWRVAAGSVDKLTFDPAGFGFARAQLDQLAGGDAQANAAAVRAVLGGARGPVRDAVVLNAAGAIVAHAGLSSRAEWLPAWEEGLRRASAAIDTGAAEQLLARWVRFGRQI</sequence>
<proteinExistence type="inferred from homology"/>